<protein>
    <recommendedName>
        <fullName evidence="1">Small ribosomal subunit protein uS5</fullName>
    </recommendedName>
    <alternativeName>
        <fullName evidence="2">30S ribosomal protein S5</fullName>
    </alternativeName>
</protein>
<dbReference type="EMBL" id="CP000458">
    <property type="protein sequence ID" value="ABK07119.1"/>
    <property type="molecule type" value="Genomic_DNA"/>
</dbReference>
<dbReference type="RefSeq" id="WP_006752931.1">
    <property type="nucleotide sequence ID" value="NC_008542.1"/>
</dbReference>
<dbReference type="SMR" id="A0K3P2"/>
<dbReference type="GeneID" id="98107143"/>
<dbReference type="KEGG" id="bch:Bcen2424_0365"/>
<dbReference type="HOGENOM" id="CLU_065898_2_2_4"/>
<dbReference type="GO" id="GO:0015935">
    <property type="term" value="C:small ribosomal subunit"/>
    <property type="evidence" value="ECO:0007669"/>
    <property type="project" value="InterPro"/>
</dbReference>
<dbReference type="GO" id="GO:0019843">
    <property type="term" value="F:rRNA binding"/>
    <property type="evidence" value="ECO:0007669"/>
    <property type="project" value="UniProtKB-UniRule"/>
</dbReference>
<dbReference type="GO" id="GO:0003735">
    <property type="term" value="F:structural constituent of ribosome"/>
    <property type="evidence" value="ECO:0007669"/>
    <property type="project" value="InterPro"/>
</dbReference>
<dbReference type="GO" id="GO:0006412">
    <property type="term" value="P:translation"/>
    <property type="evidence" value="ECO:0007669"/>
    <property type="project" value="UniProtKB-UniRule"/>
</dbReference>
<dbReference type="FunFam" id="3.30.160.20:FF:000001">
    <property type="entry name" value="30S ribosomal protein S5"/>
    <property type="match status" value="1"/>
</dbReference>
<dbReference type="FunFam" id="3.30.230.10:FF:000002">
    <property type="entry name" value="30S ribosomal protein S5"/>
    <property type="match status" value="1"/>
</dbReference>
<dbReference type="Gene3D" id="3.30.160.20">
    <property type="match status" value="1"/>
</dbReference>
<dbReference type="Gene3D" id="3.30.230.10">
    <property type="match status" value="1"/>
</dbReference>
<dbReference type="HAMAP" id="MF_01307_B">
    <property type="entry name" value="Ribosomal_uS5_B"/>
    <property type="match status" value="1"/>
</dbReference>
<dbReference type="InterPro" id="IPR020568">
    <property type="entry name" value="Ribosomal_Su5_D2-typ_SF"/>
</dbReference>
<dbReference type="InterPro" id="IPR000851">
    <property type="entry name" value="Ribosomal_uS5"/>
</dbReference>
<dbReference type="InterPro" id="IPR005712">
    <property type="entry name" value="Ribosomal_uS5_bac-type"/>
</dbReference>
<dbReference type="InterPro" id="IPR005324">
    <property type="entry name" value="Ribosomal_uS5_C"/>
</dbReference>
<dbReference type="InterPro" id="IPR013810">
    <property type="entry name" value="Ribosomal_uS5_N"/>
</dbReference>
<dbReference type="InterPro" id="IPR018192">
    <property type="entry name" value="Ribosomal_uS5_N_CS"/>
</dbReference>
<dbReference type="InterPro" id="IPR014721">
    <property type="entry name" value="Ribsml_uS5_D2-typ_fold_subgr"/>
</dbReference>
<dbReference type="NCBIfam" id="TIGR01021">
    <property type="entry name" value="rpsE_bact"/>
    <property type="match status" value="1"/>
</dbReference>
<dbReference type="PANTHER" id="PTHR48277">
    <property type="entry name" value="MITOCHONDRIAL RIBOSOMAL PROTEIN S5"/>
    <property type="match status" value="1"/>
</dbReference>
<dbReference type="PANTHER" id="PTHR48277:SF1">
    <property type="entry name" value="MITOCHONDRIAL RIBOSOMAL PROTEIN S5"/>
    <property type="match status" value="1"/>
</dbReference>
<dbReference type="Pfam" id="PF00333">
    <property type="entry name" value="Ribosomal_S5"/>
    <property type="match status" value="1"/>
</dbReference>
<dbReference type="Pfam" id="PF03719">
    <property type="entry name" value="Ribosomal_S5_C"/>
    <property type="match status" value="1"/>
</dbReference>
<dbReference type="SUPFAM" id="SSF54768">
    <property type="entry name" value="dsRNA-binding domain-like"/>
    <property type="match status" value="1"/>
</dbReference>
<dbReference type="SUPFAM" id="SSF54211">
    <property type="entry name" value="Ribosomal protein S5 domain 2-like"/>
    <property type="match status" value="1"/>
</dbReference>
<dbReference type="PROSITE" id="PS00585">
    <property type="entry name" value="RIBOSOMAL_S5"/>
    <property type="match status" value="1"/>
</dbReference>
<dbReference type="PROSITE" id="PS50881">
    <property type="entry name" value="S5_DSRBD"/>
    <property type="match status" value="1"/>
</dbReference>
<feature type="chain" id="PRO_0000323085" description="Small ribosomal subunit protein uS5">
    <location>
        <begin position="1"/>
        <end position="172"/>
    </location>
</feature>
<feature type="domain" description="S5 DRBM" evidence="1">
    <location>
        <begin position="17"/>
        <end position="80"/>
    </location>
</feature>
<sequence>MAKMQAKVQADERDDGLREKMISVNRVTKVVKGGRILGFAALTVVGDGDGRIGMGKGKAKEVPVAVQKAMEQARRNMFKVPLKNGTLQHEVHGKHGASAVLLAPAKAGTGVIAGGPMRAVFDVMGVQNVVAKSHGSTNPYNLVRATLDGLRKQSTPADIAAKRGKSVEDILG</sequence>
<organism>
    <name type="scientific">Burkholderia cenocepacia (strain HI2424)</name>
    <dbReference type="NCBI Taxonomy" id="331272"/>
    <lineage>
        <taxon>Bacteria</taxon>
        <taxon>Pseudomonadati</taxon>
        <taxon>Pseudomonadota</taxon>
        <taxon>Betaproteobacteria</taxon>
        <taxon>Burkholderiales</taxon>
        <taxon>Burkholderiaceae</taxon>
        <taxon>Burkholderia</taxon>
        <taxon>Burkholderia cepacia complex</taxon>
    </lineage>
</organism>
<name>RS5_BURCH</name>
<gene>
    <name evidence="1" type="primary">rpsE</name>
    <name type="ordered locus">Bcen2424_0365</name>
</gene>
<evidence type="ECO:0000255" key="1">
    <source>
        <dbReference type="HAMAP-Rule" id="MF_01307"/>
    </source>
</evidence>
<evidence type="ECO:0000305" key="2"/>
<comment type="function">
    <text evidence="1">With S4 and S12 plays an important role in translational accuracy.</text>
</comment>
<comment type="function">
    <text evidence="1">Located at the back of the 30S subunit body where it stabilizes the conformation of the head with respect to the body.</text>
</comment>
<comment type="subunit">
    <text evidence="1">Part of the 30S ribosomal subunit. Contacts proteins S4 and S8.</text>
</comment>
<comment type="domain">
    <text>The N-terminal domain interacts with the head of the 30S subunit; the C-terminal domain interacts with the body and contacts protein S4. The interaction surface between S4 and S5 is involved in control of translational fidelity.</text>
</comment>
<comment type="similarity">
    <text evidence="1">Belongs to the universal ribosomal protein uS5 family.</text>
</comment>
<proteinExistence type="inferred from homology"/>
<keyword id="KW-0687">Ribonucleoprotein</keyword>
<keyword id="KW-0689">Ribosomal protein</keyword>
<keyword id="KW-0694">RNA-binding</keyword>
<keyword id="KW-0699">rRNA-binding</keyword>
<reference key="1">
    <citation type="submission" date="2006-08" db="EMBL/GenBank/DDBJ databases">
        <title>Complete sequence of chromosome 1 of Burkholderia cenocepacia HI2424.</title>
        <authorList>
            <person name="Copeland A."/>
            <person name="Lucas S."/>
            <person name="Lapidus A."/>
            <person name="Barry K."/>
            <person name="Detter J.C."/>
            <person name="Glavina del Rio T."/>
            <person name="Hammon N."/>
            <person name="Israni S."/>
            <person name="Pitluck S."/>
            <person name="Chain P."/>
            <person name="Malfatti S."/>
            <person name="Shin M."/>
            <person name="Vergez L."/>
            <person name="Schmutz J."/>
            <person name="Larimer F."/>
            <person name="Land M."/>
            <person name="Hauser L."/>
            <person name="Kyrpides N."/>
            <person name="Kim E."/>
            <person name="LiPuma J.J."/>
            <person name="Gonzalez C.F."/>
            <person name="Konstantinidis K."/>
            <person name="Tiedje J.M."/>
            <person name="Richardson P."/>
        </authorList>
    </citation>
    <scope>NUCLEOTIDE SEQUENCE [LARGE SCALE GENOMIC DNA]</scope>
    <source>
        <strain>HI2424</strain>
    </source>
</reference>
<accession>A0K3P2</accession>